<name>ERD2_DICDI</name>
<accession>Q86JE5</accession>
<accession>Q55A16</accession>
<proteinExistence type="inferred from homology"/>
<sequence length="218" mass="25564">MNLFSFLGDMLHLGSMLILLFKIKNDKSCAGVSLKSQILFTIVFTARYLDLFTNYVSLYITFMKITYIAVSYYTLHLIARKYKFTYDKDHDTFKIVYLIASCAILSLITYDKTTIGIYSTFLEILWTFSIYLESIAILPQLILLQRTGEVEALTSNYIVLLGGYRAFYLFNWIYRITFYNWSGKIEMLSGLLQTILYADFFYYYAKSRMYGKKLVLPQ</sequence>
<feature type="chain" id="PRO_0000328460" description="ER lumen protein-retaining receptor">
    <location>
        <begin position="1"/>
        <end position="218"/>
    </location>
</feature>
<feature type="topological domain" description="Lumenal" evidence="2">
    <location>
        <begin position="1"/>
        <end position="2"/>
    </location>
</feature>
<feature type="transmembrane region" description="Helical" evidence="2">
    <location>
        <begin position="3"/>
        <end position="23"/>
    </location>
</feature>
<feature type="topological domain" description="Cytoplasmic" evidence="2">
    <location>
        <begin position="24"/>
        <end position="57"/>
    </location>
</feature>
<feature type="transmembrane region" description="Helical" evidence="2">
    <location>
        <begin position="58"/>
        <end position="78"/>
    </location>
</feature>
<feature type="topological domain" description="Lumenal" evidence="2">
    <location>
        <begin position="79"/>
        <end position="94"/>
    </location>
</feature>
<feature type="transmembrane region" description="Helical" evidence="2">
    <location>
        <begin position="95"/>
        <end position="115"/>
    </location>
</feature>
<feature type="topological domain" description="Cytoplasmic" evidence="2">
    <location>
        <begin position="116"/>
        <end position="123"/>
    </location>
</feature>
<feature type="transmembrane region" description="Helical" evidence="2">
    <location>
        <begin position="124"/>
        <end position="144"/>
    </location>
</feature>
<feature type="topological domain" description="Lumenal" evidence="2">
    <location>
        <begin position="145"/>
        <end position="152"/>
    </location>
</feature>
<feature type="transmembrane region" description="Helical" evidence="2">
    <location>
        <begin position="153"/>
        <end position="173"/>
    </location>
</feature>
<feature type="topological domain" description="Cytoplasmic" evidence="2">
    <location>
        <begin position="174"/>
        <end position="184"/>
    </location>
</feature>
<feature type="transmembrane region" description="Helical" evidence="2">
    <location>
        <begin position="185"/>
        <end position="205"/>
    </location>
</feature>
<feature type="topological domain" description="Lumenal" evidence="2">
    <location>
        <begin position="206"/>
        <end position="218"/>
    </location>
</feature>
<comment type="function">
    <text evidence="1">Required for the retention of luminal endoplasmic reticulum proteins. Determines the specificity of the luminal ER protein retention system. Also required for normal vesicular traffic through the Golgi (By similarity).</text>
</comment>
<comment type="subcellular location">
    <subcellularLocation>
        <location evidence="1">Endoplasmic reticulum membrane</location>
        <topology evidence="1">Multi-pass membrane protein</topology>
    </subcellularLocation>
</comment>
<comment type="similarity">
    <text evidence="3">Belongs to the ERD2 family.</text>
</comment>
<reference key="1">
    <citation type="journal article" date="2002" name="Nature">
        <title>Sequence and analysis of chromosome 2 of Dictyostelium discoideum.</title>
        <authorList>
            <person name="Gloeckner G."/>
            <person name="Eichinger L."/>
            <person name="Szafranski K."/>
            <person name="Pachebat J.A."/>
            <person name="Bankier A.T."/>
            <person name="Dear P.H."/>
            <person name="Lehmann R."/>
            <person name="Baumgart C."/>
            <person name="Parra G."/>
            <person name="Abril J.F."/>
            <person name="Guigo R."/>
            <person name="Kumpf K."/>
            <person name="Tunggal B."/>
            <person name="Cox E.C."/>
            <person name="Quail M.A."/>
            <person name="Platzer M."/>
            <person name="Rosenthal A."/>
            <person name="Noegel A.A."/>
        </authorList>
    </citation>
    <scope>NUCLEOTIDE SEQUENCE [LARGE SCALE GENOMIC DNA]</scope>
    <source>
        <strain>AX4</strain>
    </source>
</reference>
<reference key="2">
    <citation type="journal article" date="2005" name="Nature">
        <title>The genome of the social amoeba Dictyostelium discoideum.</title>
        <authorList>
            <person name="Eichinger L."/>
            <person name="Pachebat J.A."/>
            <person name="Gloeckner G."/>
            <person name="Rajandream M.A."/>
            <person name="Sucgang R."/>
            <person name="Berriman M."/>
            <person name="Song J."/>
            <person name="Olsen R."/>
            <person name="Szafranski K."/>
            <person name="Xu Q."/>
            <person name="Tunggal B."/>
            <person name="Kummerfeld S."/>
            <person name="Madera M."/>
            <person name="Konfortov B.A."/>
            <person name="Rivero F."/>
            <person name="Bankier A.T."/>
            <person name="Lehmann R."/>
            <person name="Hamlin N."/>
            <person name="Davies R."/>
            <person name="Gaudet P."/>
            <person name="Fey P."/>
            <person name="Pilcher K."/>
            <person name="Chen G."/>
            <person name="Saunders D."/>
            <person name="Sodergren E.J."/>
            <person name="Davis P."/>
            <person name="Kerhornou A."/>
            <person name="Nie X."/>
            <person name="Hall N."/>
            <person name="Anjard C."/>
            <person name="Hemphill L."/>
            <person name="Bason N."/>
            <person name="Farbrother P."/>
            <person name="Desany B."/>
            <person name="Just E."/>
            <person name="Morio T."/>
            <person name="Rost R."/>
            <person name="Churcher C.M."/>
            <person name="Cooper J."/>
            <person name="Haydock S."/>
            <person name="van Driessche N."/>
            <person name="Cronin A."/>
            <person name="Goodhead I."/>
            <person name="Muzny D.M."/>
            <person name="Mourier T."/>
            <person name="Pain A."/>
            <person name="Lu M."/>
            <person name="Harper D."/>
            <person name="Lindsay R."/>
            <person name="Hauser H."/>
            <person name="James K.D."/>
            <person name="Quiles M."/>
            <person name="Madan Babu M."/>
            <person name="Saito T."/>
            <person name="Buchrieser C."/>
            <person name="Wardroper A."/>
            <person name="Felder M."/>
            <person name="Thangavelu M."/>
            <person name="Johnson D."/>
            <person name="Knights A."/>
            <person name="Loulseged H."/>
            <person name="Mungall K.L."/>
            <person name="Oliver K."/>
            <person name="Price C."/>
            <person name="Quail M.A."/>
            <person name="Urushihara H."/>
            <person name="Hernandez J."/>
            <person name="Rabbinowitsch E."/>
            <person name="Steffen D."/>
            <person name="Sanders M."/>
            <person name="Ma J."/>
            <person name="Kohara Y."/>
            <person name="Sharp S."/>
            <person name="Simmonds M.N."/>
            <person name="Spiegler S."/>
            <person name="Tivey A."/>
            <person name="Sugano S."/>
            <person name="White B."/>
            <person name="Walker D."/>
            <person name="Woodward J.R."/>
            <person name="Winckler T."/>
            <person name="Tanaka Y."/>
            <person name="Shaulsky G."/>
            <person name="Schleicher M."/>
            <person name="Weinstock G.M."/>
            <person name="Rosenthal A."/>
            <person name="Cox E.C."/>
            <person name="Chisholm R.L."/>
            <person name="Gibbs R.A."/>
            <person name="Loomis W.F."/>
            <person name="Platzer M."/>
            <person name="Kay R.R."/>
            <person name="Williams J.G."/>
            <person name="Dear P.H."/>
            <person name="Noegel A.A."/>
            <person name="Barrell B.G."/>
            <person name="Kuspa A."/>
        </authorList>
    </citation>
    <scope>NUCLEOTIDE SEQUENCE [LARGE SCALE GENOMIC DNA]</scope>
    <source>
        <strain>AX4</strain>
    </source>
</reference>
<organism>
    <name type="scientific">Dictyostelium discoideum</name>
    <name type="common">Social amoeba</name>
    <dbReference type="NCBI Taxonomy" id="44689"/>
    <lineage>
        <taxon>Eukaryota</taxon>
        <taxon>Amoebozoa</taxon>
        <taxon>Evosea</taxon>
        <taxon>Eumycetozoa</taxon>
        <taxon>Dictyostelia</taxon>
        <taxon>Dictyosteliales</taxon>
        <taxon>Dictyosteliaceae</taxon>
        <taxon>Dictyostelium</taxon>
    </lineage>
</organism>
<keyword id="KW-0256">Endoplasmic reticulum</keyword>
<keyword id="KW-0931">ER-Golgi transport</keyword>
<keyword id="KW-0472">Membrane</keyword>
<keyword id="KW-0653">Protein transport</keyword>
<keyword id="KW-0675">Receptor</keyword>
<keyword id="KW-1185">Reference proteome</keyword>
<keyword id="KW-0812">Transmembrane</keyword>
<keyword id="KW-1133">Transmembrane helix</keyword>
<keyword id="KW-0813">Transport</keyword>
<dbReference type="EMBL" id="AAFI02000008">
    <property type="protein sequence ID" value="EAL71214.1"/>
    <property type="molecule type" value="Genomic_DNA"/>
</dbReference>
<dbReference type="RefSeq" id="XP_645168.1">
    <property type="nucleotide sequence ID" value="XM_640076.1"/>
</dbReference>
<dbReference type="SMR" id="Q86JE5"/>
<dbReference type="FunCoup" id="Q86JE5">
    <property type="interactions" value="568"/>
</dbReference>
<dbReference type="STRING" id="44689.Q86JE5"/>
<dbReference type="PaxDb" id="44689-DDB0304415"/>
<dbReference type="EnsemblProtists" id="EAL71214">
    <property type="protein sequence ID" value="EAL71214"/>
    <property type="gene ID" value="DDB_G0272124"/>
</dbReference>
<dbReference type="GeneID" id="8618340"/>
<dbReference type="KEGG" id="ddi:DDB_G0272124"/>
<dbReference type="dictyBase" id="DDB_G0272124">
    <property type="gene designation" value="kdelr"/>
</dbReference>
<dbReference type="VEuPathDB" id="AmoebaDB:DDB_G0272124"/>
<dbReference type="eggNOG" id="KOG3106">
    <property type="taxonomic scope" value="Eukaryota"/>
</dbReference>
<dbReference type="HOGENOM" id="CLU_057784_0_0_1"/>
<dbReference type="InParanoid" id="Q86JE5"/>
<dbReference type="OMA" id="WKSRSCE"/>
<dbReference type="PhylomeDB" id="Q86JE5"/>
<dbReference type="Reactome" id="R-DDI-6807878">
    <property type="pathway name" value="COPI-mediated anterograde transport"/>
</dbReference>
<dbReference type="Reactome" id="R-DDI-6811434">
    <property type="pathway name" value="COPI-dependent Golgi-to-ER retrograde traffic"/>
</dbReference>
<dbReference type="PRO" id="PR:Q86JE5"/>
<dbReference type="Proteomes" id="UP000002195">
    <property type="component" value="Chromosome 2"/>
</dbReference>
<dbReference type="GO" id="GO:0005801">
    <property type="term" value="C:cis-Golgi network"/>
    <property type="evidence" value="ECO:0000318"/>
    <property type="project" value="GO_Central"/>
</dbReference>
<dbReference type="GO" id="GO:0005783">
    <property type="term" value="C:endoplasmic reticulum"/>
    <property type="evidence" value="ECO:0000318"/>
    <property type="project" value="GO_Central"/>
</dbReference>
<dbReference type="GO" id="GO:0005789">
    <property type="term" value="C:endoplasmic reticulum membrane"/>
    <property type="evidence" value="ECO:0007669"/>
    <property type="project" value="UniProtKB-SubCell"/>
</dbReference>
<dbReference type="GO" id="GO:0046923">
    <property type="term" value="F:ER retention sequence binding"/>
    <property type="evidence" value="ECO:0000318"/>
    <property type="project" value="GO_Central"/>
</dbReference>
<dbReference type="GO" id="GO:0006621">
    <property type="term" value="P:protein retention in ER lumen"/>
    <property type="evidence" value="ECO:0000318"/>
    <property type="project" value="GO_Central"/>
</dbReference>
<dbReference type="GO" id="GO:0015031">
    <property type="term" value="P:protein transport"/>
    <property type="evidence" value="ECO:0007669"/>
    <property type="project" value="UniProtKB-KW"/>
</dbReference>
<dbReference type="GO" id="GO:0016192">
    <property type="term" value="P:vesicle-mediated transport"/>
    <property type="evidence" value="ECO:0007669"/>
    <property type="project" value="UniProtKB-KW"/>
</dbReference>
<dbReference type="InterPro" id="IPR000133">
    <property type="entry name" value="ER_ret_rcpt"/>
</dbReference>
<dbReference type="PANTHER" id="PTHR10585">
    <property type="entry name" value="ER LUMEN PROTEIN RETAINING RECEPTOR"/>
    <property type="match status" value="1"/>
</dbReference>
<dbReference type="Pfam" id="PF00810">
    <property type="entry name" value="ER_lumen_recept"/>
    <property type="match status" value="1"/>
</dbReference>
<dbReference type="PRINTS" id="PR00660">
    <property type="entry name" value="ERLUMENR"/>
</dbReference>
<dbReference type="PROSITE" id="PS00951">
    <property type="entry name" value="ER_LUMEN_RECEPTOR_1"/>
    <property type="match status" value="1"/>
</dbReference>
<gene>
    <name type="primary">kdelr</name>
    <name type="synonym">erd2</name>
    <name type="ORF">DDB_G0272124</name>
</gene>
<protein>
    <recommendedName>
        <fullName>ER lumen protein-retaining receptor</fullName>
    </recommendedName>
</protein>
<evidence type="ECO:0000250" key="1"/>
<evidence type="ECO:0000255" key="2"/>
<evidence type="ECO:0000305" key="3"/>